<organism>
    <name type="scientific">Borrelia garinii subsp. bavariensis (strain ATCC BAA-2496 / DSM 23469 / PBi)</name>
    <name type="common">Borreliella bavariensis</name>
    <dbReference type="NCBI Taxonomy" id="290434"/>
    <lineage>
        <taxon>Bacteria</taxon>
        <taxon>Pseudomonadati</taxon>
        <taxon>Spirochaetota</taxon>
        <taxon>Spirochaetia</taxon>
        <taxon>Spirochaetales</taxon>
        <taxon>Borreliaceae</taxon>
        <taxon>Borreliella</taxon>
    </lineage>
</organism>
<reference key="1">
    <citation type="journal article" date="2004" name="Nucleic Acids Res.">
        <title>Comparative analysis of the Borrelia garinii genome.</title>
        <authorList>
            <person name="Gloeckner G."/>
            <person name="Lehmann R."/>
            <person name="Romualdi A."/>
            <person name="Pradella S."/>
            <person name="Schulte-Spechtel U."/>
            <person name="Schilhabel M."/>
            <person name="Wilske B."/>
            <person name="Suehnel J."/>
            <person name="Platzer M."/>
        </authorList>
    </citation>
    <scope>NUCLEOTIDE SEQUENCE [LARGE SCALE GENOMIC DNA]</scope>
    <source>
        <strain>ATCC BAA-2496 / DSM 23469 / PBi</strain>
    </source>
</reference>
<protein>
    <recommendedName>
        <fullName evidence="1">Glutamyl-tRNA(Gln) amidotransferase subunit A</fullName>
        <shortName evidence="1">Glu-ADT subunit A</shortName>
        <ecNumber evidence="1">6.3.5.7</ecNumber>
    </recommendedName>
</protein>
<name>GATA_BORGP</name>
<accession>Q661S5</accession>
<evidence type="ECO:0000255" key="1">
    <source>
        <dbReference type="HAMAP-Rule" id="MF_00120"/>
    </source>
</evidence>
<sequence length="481" mass="53371">MDLSNLTLTKIQELVLTKKCKIYDILLAYKNNYELNKDINGYIEFFDDSLDIAKRYDDCLKNCELEDLPLIGMPIAVKDNISIQDKSLTCASEILKGYISPYDATVIKRLKNKGAILIGKTNMDEFAMGSTGEFSCYGATLNPLNREYVIGGSSGGSAAVVASFQAPFSLGSDTGGSVRLPASFSGILGFKPSYGGLSRYGLASYASSFDQIGFFSHSIEDIALILKHTCGADKMDSTSVDIFDDFYPLKTEPLQGKNLALIKELSEDLMDKNVASSFAKFKFDLLSKGANIKEVSIEEINFILSIYYTISPVEASSNLARYTGLCYGKRISENLSLNDFYFKHRSNFLSEEVKRRIILGNYLLSEGYDAKYYAKACEILQNLIIPKFNKLFESCDFIITPTSFVKPFRVGLDFDDPVKMYYSDICTVIANLIGAPAISLPYSKDKEGLSIGMQIIGRSKKDFELLSFSKNVIRELGLNGI</sequence>
<feature type="chain" id="PRO_0000241077" description="Glutamyl-tRNA(Gln) amidotransferase subunit A">
    <location>
        <begin position="1"/>
        <end position="481"/>
    </location>
</feature>
<feature type="active site" description="Charge relay system" evidence="1">
    <location>
        <position position="78"/>
    </location>
</feature>
<feature type="active site" description="Charge relay system" evidence="1">
    <location>
        <position position="153"/>
    </location>
</feature>
<feature type="active site" description="Acyl-ester intermediate" evidence="1">
    <location>
        <position position="177"/>
    </location>
</feature>
<keyword id="KW-0067">ATP-binding</keyword>
<keyword id="KW-0436">Ligase</keyword>
<keyword id="KW-0547">Nucleotide-binding</keyword>
<keyword id="KW-0648">Protein biosynthesis</keyword>
<proteinExistence type="inferred from homology"/>
<gene>
    <name evidence="1" type="primary">gatA</name>
    <name type="ordered locus">BG0343</name>
</gene>
<dbReference type="EC" id="6.3.5.7" evidence="1"/>
<dbReference type="EMBL" id="CP000013">
    <property type="protein sequence ID" value="AAU07196.1"/>
    <property type="molecule type" value="Genomic_DNA"/>
</dbReference>
<dbReference type="RefSeq" id="WP_011193671.1">
    <property type="nucleotide sequence ID" value="NZ_CP028872.1"/>
</dbReference>
<dbReference type="SMR" id="Q661S5"/>
<dbReference type="GeneID" id="45161131"/>
<dbReference type="KEGG" id="bga:BG0343"/>
<dbReference type="eggNOG" id="COG0154">
    <property type="taxonomic scope" value="Bacteria"/>
</dbReference>
<dbReference type="HOGENOM" id="CLU_009600_0_3_12"/>
<dbReference type="OrthoDB" id="9811471at2"/>
<dbReference type="Proteomes" id="UP000002276">
    <property type="component" value="Chromosome"/>
</dbReference>
<dbReference type="GO" id="GO:0030956">
    <property type="term" value="C:glutamyl-tRNA(Gln) amidotransferase complex"/>
    <property type="evidence" value="ECO:0007669"/>
    <property type="project" value="InterPro"/>
</dbReference>
<dbReference type="GO" id="GO:0005524">
    <property type="term" value="F:ATP binding"/>
    <property type="evidence" value="ECO:0007669"/>
    <property type="project" value="UniProtKB-KW"/>
</dbReference>
<dbReference type="GO" id="GO:0050567">
    <property type="term" value="F:glutaminyl-tRNA synthase (glutamine-hydrolyzing) activity"/>
    <property type="evidence" value="ECO:0007669"/>
    <property type="project" value="UniProtKB-UniRule"/>
</dbReference>
<dbReference type="GO" id="GO:0006412">
    <property type="term" value="P:translation"/>
    <property type="evidence" value="ECO:0007669"/>
    <property type="project" value="UniProtKB-UniRule"/>
</dbReference>
<dbReference type="Gene3D" id="3.90.1300.10">
    <property type="entry name" value="Amidase signature (AS) domain"/>
    <property type="match status" value="1"/>
</dbReference>
<dbReference type="HAMAP" id="MF_00120">
    <property type="entry name" value="GatA"/>
    <property type="match status" value="1"/>
</dbReference>
<dbReference type="InterPro" id="IPR000120">
    <property type="entry name" value="Amidase"/>
</dbReference>
<dbReference type="InterPro" id="IPR020556">
    <property type="entry name" value="Amidase_CS"/>
</dbReference>
<dbReference type="InterPro" id="IPR023631">
    <property type="entry name" value="Amidase_dom"/>
</dbReference>
<dbReference type="InterPro" id="IPR036928">
    <property type="entry name" value="AS_sf"/>
</dbReference>
<dbReference type="InterPro" id="IPR004412">
    <property type="entry name" value="GatA"/>
</dbReference>
<dbReference type="NCBIfam" id="TIGR00132">
    <property type="entry name" value="gatA"/>
    <property type="match status" value="1"/>
</dbReference>
<dbReference type="PANTHER" id="PTHR11895:SF151">
    <property type="entry name" value="GLUTAMYL-TRNA(GLN) AMIDOTRANSFERASE SUBUNIT A"/>
    <property type="match status" value="1"/>
</dbReference>
<dbReference type="PANTHER" id="PTHR11895">
    <property type="entry name" value="TRANSAMIDASE"/>
    <property type="match status" value="1"/>
</dbReference>
<dbReference type="Pfam" id="PF01425">
    <property type="entry name" value="Amidase"/>
    <property type="match status" value="1"/>
</dbReference>
<dbReference type="SUPFAM" id="SSF75304">
    <property type="entry name" value="Amidase signature (AS) enzymes"/>
    <property type="match status" value="1"/>
</dbReference>
<dbReference type="PROSITE" id="PS00571">
    <property type="entry name" value="AMIDASES"/>
    <property type="match status" value="1"/>
</dbReference>
<comment type="function">
    <text evidence="1">Allows the formation of correctly charged Gln-tRNA(Gln) through the transamidation of misacylated Glu-tRNA(Gln) in organisms which lack glutaminyl-tRNA synthetase. The reaction takes place in the presence of glutamine and ATP through an activated gamma-phospho-Glu-tRNA(Gln).</text>
</comment>
<comment type="catalytic activity">
    <reaction evidence="1">
        <text>L-glutamyl-tRNA(Gln) + L-glutamine + ATP + H2O = L-glutaminyl-tRNA(Gln) + L-glutamate + ADP + phosphate + H(+)</text>
        <dbReference type="Rhea" id="RHEA:17521"/>
        <dbReference type="Rhea" id="RHEA-COMP:9681"/>
        <dbReference type="Rhea" id="RHEA-COMP:9684"/>
        <dbReference type="ChEBI" id="CHEBI:15377"/>
        <dbReference type="ChEBI" id="CHEBI:15378"/>
        <dbReference type="ChEBI" id="CHEBI:29985"/>
        <dbReference type="ChEBI" id="CHEBI:30616"/>
        <dbReference type="ChEBI" id="CHEBI:43474"/>
        <dbReference type="ChEBI" id="CHEBI:58359"/>
        <dbReference type="ChEBI" id="CHEBI:78520"/>
        <dbReference type="ChEBI" id="CHEBI:78521"/>
        <dbReference type="ChEBI" id="CHEBI:456216"/>
        <dbReference type="EC" id="6.3.5.7"/>
    </reaction>
</comment>
<comment type="subunit">
    <text evidence="1">Heterotrimer of A, B and C subunits.</text>
</comment>
<comment type="similarity">
    <text evidence="1">Belongs to the amidase family. GatA subfamily.</text>
</comment>